<name>FKBP3_DEBHA</name>
<reference key="1">
    <citation type="journal article" date="2004" name="Nature">
        <title>Genome evolution in yeasts.</title>
        <authorList>
            <person name="Dujon B."/>
            <person name="Sherman D."/>
            <person name="Fischer G."/>
            <person name="Durrens P."/>
            <person name="Casaregola S."/>
            <person name="Lafontaine I."/>
            <person name="de Montigny J."/>
            <person name="Marck C."/>
            <person name="Neuveglise C."/>
            <person name="Talla E."/>
            <person name="Goffard N."/>
            <person name="Frangeul L."/>
            <person name="Aigle M."/>
            <person name="Anthouard V."/>
            <person name="Babour A."/>
            <person name="Barbe V."/>
            <person name="Barnay S."/>
            <person name="Blanchin S."/>
            <person name="Beckerich J.-M."/>
            <person name="Beyne E."/>
            <person name="Bleykasten C."/>
            <person name="Boisrame A."/>
            <person name="Boyer J."/>
            <person name="Cattolico L."/>
            <person name="Confanioleri F."/>
            <person name="de Daruvar A."/>
            <person name="Despons L."/>
            <person name="Fabre E."/>
            <person name="Fairhead C."/>
            <person name="Ferry-Dumazet H."/>
            <person name="Groppi A."/>
            <person name="Hantraye F."/>
            <person name="Hennequin C."/>
            <person name="Jauniaux N."/>
            <person name="Joyet P."/>
            <person name="Kachouri R."/>
            <person name="Kerrest A."/>
            <person name="Koszul R."/>
            <person name="Lemaire M."/>
            <person name="Lesur I."/>
            <person name="Ma L."/>
            <person name="Muller H."/>
            <person name="Nicaud J.-M."/>
            <person name="Nikolski M."/>
            <person name="Oztas S."/>
            <person name="Ozier-Kalogeropoulos O."/>
            <person name="Pellenz S."/>
            <person name="Potier S."/>
            <person name="Richard G.-F."/>
            <person name="Straub M.-L."/>
            <person name="Suleau A."/>
            <person name="Swennen D."/>
            <person name="Tekaia F."/>
            <person name="Wesolowski-Louvel M."/>
            <person name="Westhof E."/>
            <person name="Wirth B."/>
            <person name="Zeniou-Meyer M."/>
            <person name="Zivanovic Y."/>
            <person name="Bolotin-Fukuhara M."/>
            <person name="Thierry A."/>
            <person name="Bouchier C."/>
            <person name="Caudron B."/>
            <person name="Scarpelli C."/>
            <person name="Gaillardin C."/>
            <person name="Weissenbach J."/>
            <person name="Wincker P."/>
            <person name="Souciet J.-L."/>
        </authorList>
    </citation>
    <scope>NUCLEOTIDE SEQUENCE [LARGE SCALE GENOMIC DNA]</scope>
    <source>
        <strain>ATCC 36239 / CBS 767 / BCRC 21394 / JCM 1990 / NBRC 0083 / IGC 2968</strain>
    </source>
</reference>
<organism>
    <name type="scientific">Debaryomyces hansenii (strain ATCC 36239 / CBS 767 / BCRC 21394 / JCM 1990 / NBRC 0083 / IGC 2968)</name>
    <name type="common">Yeast</name>
    <name type="synonym">Torulaspora hansenii</name>
    <dbReference type="NCBI Taxonomy" id="284592"/>
    <lineage>
        <taxon>Eukaryota</taxon>
        <taxon>Fungi</taxon>
        <taxon>Dikarya</taxon>
        <taxon>Ascomycota</taxon>
        <taxon>Saccharomycotina</taxon>
        <taxon>Pichiomycetes</taxon>
        <taxon>Debaryomycetaceae</taxon>
        <taxon>Debaryomyces</taxon>
    </lineage>
</organism>
<comment type="function">
    <text evidence="1">PPIases accelerate the folding of proteins. It catalyzes the cis-trans isomerization of proline imidic peptide bonds in oligopeptides (By similarity).</text>
</comment>
<comment type="catalytic activity">
    <reaction>
        <text>[protein]-peptidylproline (omega=180) = [protein]-peptidylproline (omega=0)</text>
        <dbReference type="Rhea" id="RHEA:16237"/>
        <dbReference type="Rhea" id="RHEA-COMP:10747"/>
        <dbReference type="Rhea" id="RHEA-COMP:10748"/>
        <dbReference type="ChEBI" id="CHEBI:83833"/>
        <dbReference type="ChEBI" id="CHEBI:83834"/>
        <dbReference type="EC" id="5.2.1.8"/>
    </reaction>
</comment>
<comment type="activity regulation">
    <text evidence="1">Inhibited by both FK506 and rapamycin.</text>
</comment>
<comment type="subcellular location">
    <subcellularLocation>
        <location evidence="1">Nucleus</location>
        <location evidence="1">Nucleolus</location>
    </subcellularLocation>
</comment>
<comment type="similarity">
    <text evidence="4">Belongs to the FKBP-type PPIase family. FKBP3/4 subfamily.</text>
</comment>
<feature type="chain" id="PRO_0000233080" description="FK506-binding protein 3">
    <location>
        <begin position="1"/>
        <end position="437"/>
    </location>
</feature>
<feature type="domain" description="PPIase FKBP-type" evidence="2">
    <location>
        <begin position="351"/>
        <end position="437"/>
    </location>
</feature>
<feature type="region of interest" description="Disordered" evidence="3">
    <location>
        <begin position="73"/>
        <end position="132"/>
    </location>
</feature>
<feature type="region of interest" description="Disordered" evidence="3">
    <location>
        <begin position="169"/>
        <end position="349"/>
    </location>
</feature>
<feature type="compositionally biased region" description="Acidic residues" evidence="3">
    <location>
        <begin position="73"/>
        <end position="90"/>
    </location>
</feature>
<feature type="compositionally biased region" description="Acidic residues" evidence="3">
    <location>
        <begin position="106"/>
        <end position="131"/>
    </location>
</feature>
<feature type="compositionally biased region" description="Acidic residues" evidence="3">
    <location>
        <begin position="179"/>
        <end position="220"/>
    </location>
</feature>
<feature type="compositionally biased region" description="Basic and acidic residues" evidence="3">
    <location>
        <begin position="256"/>
        <end position="270"/>
    </location>
</feature>
<feature type="compositionally biased region" description="Basic and acidic residues" evidence="3">
    <location>
        <begin position="292"/>
        <end position="324"/>
    </location>
</feature>
<gene>
    <name type="primary">FPR3</name>
    <name type="ordered locus">DEHA2D09394g</name>
</gene>
<evidence type="ECO:0000250" key="1"/>
<evidence type="ECO:0000255" key="2">
    <source>
        <dbReference type="PROSITE-ProRule" id="PRU00277"/>
    </source>
</evidence>
<evidence type="ECO:0000256" key="3">
    <source>
        <dbReference type="SAM" id="MobiDB-lite"/>
    </source>
</evidence>
<evidence type="ECO:0000305" key="4"/>
<protein>
    <recommendedName>
        <fullName>FK506-binding protein 3</fullName>
        <ecNumber>5.2.1.8</ecNumber>
    </recommendedName>
    <alternativeName>
        <fullName>Peptidyl-prolyl cis-trans isomerase</fullName>
        <shortName>PPIase</shortName>
    </alternativeName>
    <alternativeName>
        <fullName>Rotamase</fullName>
    </alternativeName>
</protein>
<sequence length="437" mass="48788">MSSLIPISTYNLALQPFNPVQAIDDEYPVTIRLTLAAVDPEAVDDKAEPSTLRLLKRSNLFVDDEDLDDDLLDIEAEEADELDSEEEEEEVKPKNKKKQNKKKVEEEEEDEDEEDLDIDGSSDEEDDEDVSEFVVCTLSPKVQFQQTIDLTITPDEEVYFVVTGSYPVHLTGNYVEHPADEDSEDEYDEDSEDDYNLTPDEDEIIGGEEYDLDDLEDASDIENKIEELVEEEAQGSKKRNAEEPEAPTSKKSKKAKKEDKKSVQFTKDLEQGPTGSTLVEEKTEKKGKKEKAKKEEPKKEEPKKEQPKKEQPKKEQPKKEEASKKFPTKTLLGGVVTEDRKTGKGQTAKSGNKVGIRYIGKLKNGKVFDKNTSGKPFVFGLGKGECIKGFDLGVAGMAVGGERRVVIPPKMGYGSQALPGLPANSELTFDIKLVSIK</sequence>
<accession>Q6BSE7</accession>
<dbReference type="EC" id="5.2.1.8"/>
<dbReference type="EMBL" id="CR382136">
    <property type="protein sequence ID" value="CAG87025.1"/>
    <property type="molecule type" value="Genomic_DNA"/>
</dbReference>
<dbReference type="RefSeq" id="XP_458873.1">
    <property type="nucleotide sequence ID" value="XM_458873.1"/>
</dbReference>
<dbReference type="SMR" id="Q6BSE7"/>
<dbReference type="FunCoup" id="Q6BSE7">
    <property type="interactions" value="704"/>
</dbReference>
<dbReference type="STRING" id="284592.Q6BSE7"/>
<dbReference type="GeneID" id="2901149"/>
<dbReference type="KEGG" id="dha:DEHA2D09394g"/>
<dbReference type="VEuPathDB" id="FungiDB:DEHA2D09394g"/>
<dbReference type="eggNOG" id="KOG0552">
    <property type="taxonomic scope" value="Eukaryota"/>
</dbReference>
<dbReference type="HOGENOM" id="CLU_022297_3_1_1"/>
<dbReference type="InParanoid" id="Q6BSE7"/>
<dbReference type="OMA" id="CPPHMAY"/>
<dbReference type="OrthoDB" id="77911at2759"/>
<dbReference type="Proteomes" id="UP000000599">
    <property type="component" value="Chromosome D"/>
</dbReference>
<dbReference type="GO" id="GO:0000785">
    <property type="term" value="C:chromatin"/>
    <property type="evidence" value="ECO:0007669"/>
    <property type="project" value="TreeGrafter"/>
</dbReference>
<dbReference type="GO" id="GO:0005730">
    <property type="term" value="C:nucleolus"/>
    <property type="evidence" value="ECO:0007669"/>
    <property type="project" value="UniProtKB-SubCell"/>
</dbReference>
<dbReference type="GO" id="GO:0003755">
    <property type="term" value="F:peptidyl-prolyl cis-trans isomerase activity"/>
    <property type="evidence" value="ECO:0007669"/>
    <property type="project" value="UniProtKB-KW"/>
</dbReference>
<dbReference type="Gene3D" id="3.10.50.40">
    <property type="match status" value="1"/>
</dbReference>
<dbReference type="Gene3D" id="2.60.120.340">
    <property type="entry name" value="Nucleoplasmin core domain"/>
    <property type="match status" value="1"/>
</dbReference>
<dbReference type="InterPro" id="IPR041232">
    <property type="entry name" value="NPL"/>
</dbReference>
<dbReference type="InterPro" id="IPR046357">
    <property type="entry name" value="PPIase_dom_sf"/>
</dbReference>
<dbReference type="InterPro" id="IPR001179">
    <property type="entry name" value="PPIase_FKBP_dom"/>
</dbReference>
<dbReference type="InterPro" id="IPR023566">
    <property type="entry name" value="PPIase_Fpr3/Fpr4-like"/>
</dbReference>
<dbReference type="PANTHER" id="PTHR43811:SF19">
    <property type="entry name" value="39 KDA FK506-BINDING NUCLEAR PROTEIN"/>
    <property type="match status" value="1"/>
</dbReference>
<dbReference type="PANTHER" id="PTHR43811">
    <property type="entry name" value="FKBP-TYPE PEPTIDYL-PROLYL CIS-TRANS ISOMERASE FKPA"/>
    <property type="match status" value="1"/>
</dbReference>
<dbReference type="Pfam" id="PF00254">
    <property type="entry name" value="FKBP_C"/>
    <property type="match status" value="1"/>
</dbReference>
<dbReference type="Pfam" id="PF17800">
    <property type="entry name" value="NPL"/>
    <property type="match status" value="1"/>
</dbReference>
<dbReference type="PIRSF" id="PIRSF001473">
    <property type="entry name" value="FK506-bp_FPR3"/>
    <property type="match status" value="1"/>
</dbReference>
<dbReference type="SUPFAM" id="SSF54534">
    <property type="entry name" value="FKBP-like"/>
    <property type="match status" value="1"/>
</dbReference>
<dbReference type="PROSITE" id="PS50059">
    <property type="entry name" value="FKBP_PPIASE"/>
    <property type="match status" value="1"/>
</dbReference>
<proteinExistence type="inferred from homology"/>
<keyword id="KW-0413">Isomerase</keyword>
<keyword id="KW-0539">Nucleus</keyword>
<keyword id="KW-1185">Reference proteome</keyword>
<keyword id="KW-0697">Rotamase</keyword>